<comment type="function">
    <text evidence="2">Secreted heat soluble protein acting as a molecular shield in water-deficient condition (PubMed:28306513). Tardigrade-specific intrinsically disordered proteins (TDPs) are essential for desiccation tolerance by forming non-crystalline amorphous solids upon desiccation, and this vitrified state mirrors their protective capabilities (PubMed:28306513).</text>
</comment>
<comment type="subcellular location">
    <subcellularLocation>
        <location evidence="7">Secreted</location>
    </subcellularLocation>
</comment>
<comment type="induction">
    <text evidence="2">Expression is highly induced during desiccation (PubMed:28306513).</text>
</comment>
<comment type="domain">
    <text evidence="6">SAHS-c1, SAHS-c2 and SAHS-c3 are 3 highly conserved regions within the SAHS protein family (PubMed:22937162).</text>
</comment>
<comment type="disruption phenotype">
    <text evidence="2">Affects slightly survival under dry conditions but does not affect survival under frozen conditions (PubMed:28306513).</text>
</comment>
<comment type="miscellaneous">
    <text evidence="2">Trehalose, a disaccharide essential for several organisms to survive drying, is detected at low levels or not at all in some tardigrade species, indicating that tardigrades possess potentially novel mechanisms for surviving desiccation involving tardigrade-specific intrinsically disordered proteins (TDPs) (PubMed:28306513).</text>
</comment>
<comment type="similarity">
    <text evidence="5">Belongs to the Secretory-abundant heat soluble protein (SAHS) family.</text>
</comment>
<feature type="signal peptide" evidence="1">
    <location>
        <begin position="1"/>
        <end position="19"/>
    </location>
</feature>
<feature type="chain" id="PRO_0000440183" description="Secretory-abundant heat soluble protein 33020" evidence="1">
    <location>
        <begin position="20"/>
        <end position="168"/>
    </location>
</feature>
<feature type="region of interest" description="SAHS-c1" evidence="6">
    <location>
        <begin position="26"/>
        <end position="57"/>
    </location>
</feature>
<feature type="region of interest" description="SAHS-c2" evidence="6">
    <location>
        <begin position="72"/>
        <end position="100"/>
    </location>
</feature>
<feature type="region of interest" description="SAHS-c3" evidence="6">
    <location>
        <begin position="113"/>
        <end position="162"/>
    </location>
</feature>
<name>SAHS1_HYPEX</name>
<keyword id="KW-0964">Secreted</keyword>
<keyword id="KW-0732">Signal</keyword>
<keyword id="KW-0346">Stress response</keyword>
<protein>
    <recommendedName>
        <fullName evidence="4">Secretory-abundant heat soluble protein 33020</fullName>
        <shortName evidence="4">SAHS 33020</shortName>
    </recommendedName>
    <alternativeName>
        <fullName evidence="3">Secretory-abundant heat soluble protein d</fullName>
        <shortName evidence="3">SAHS-d</shortName>
    </alternativeName>
    <alternativeName>
        <fullName evidence="4">Tardigrade-specific intrinsically disordered protein SAHS 33020</fullName>
        <shortName evidence="4">TDP SAHS 33020</shortName>
    </alternativeName>
</protein>
<dbReference type="SMR" id="P0CU39"/>
<dbReference type="OrthoDB" id="9971011at2759"/>
<dbReference type="GO" id="GO:0005576">
    <property type="term" value="C:extracellular region"/>
    <property type="evidence" value="ECO:0007669"/>
    <property type="project" value="UniProtKB-SubCell"/>
</dbReference>
<dbReference type="GO" id="GO:0008289">
    <property type="term" value="F:lipid binding"/>
    <property type="evidence" value="ECO:0007669"/>
    <property type="project" value="InterPro"/>
</dbReference>
<dbReference type="CDD" id="cd00742">
    <property type="entry name" value="FABP"/>
    <property type="match status" value="1"/>
</dbReference>
<dbReference type="Gene3D" id="2.40.128.20">
    <property type="match status" value="1"/>
</dbReference>
<dbReference type="InterPro" id="IPR012674">
    <property type="entry name" value="Calycin"/>
</dbReference>
<dbReference type="InterPro" id="IPR000463">
    <property type="entry name" value="Fatty_acid-bd"/>
</dbReference>
<dbReference type="PRINTS" id="PR00178">
    <property type="entry name" value="FATTYACIDBP"/>
</dbReference>
<dbReference type="SUPFAM" id="SSF50814">
    <property type="entry name" value="Lipocalins"/>
    <property type="match status" value="1"/>
</dbReference>
<proteinExistence type="evidence at transcript level"/>
<gene>
    <name evidence="4" type="primary">SAHS 33020</name>
    <name evidence="3" type="synonym">SAHS-d</name>
</gene>
<reference key="1">
    <citation type="journal article" date="2012" name="PLoS ONE">
        <title>Two novel heat-soluble protein families abundantly expressed in an anhydrobiotic tardigrade.</title>
        <authorList>
            <person name="Yamaguchi A."/>
            <person name="Tanaka S."/>
            <person name="Yamaguchi S."/>
            <person name="Kuwahara H."/>
            <person name="Takamura C."/>
            <person name="Imajoh-Ohmi S."/>
            <person name="Horikawa D.D."/>
            <person name="Toyoda A."/>
            <person name="Katayama T."/>
            <person name="Arakawa K."/>
            <person name="Fujiyama A."/>
            <person name="Kubo T."/>
            <person name="Kunieda T."/>
        </authorList>
    </citation>
    <scope>DOMAIN</scope>
</reference>
<reference key="2">
    <citation type="journal article" date="2017" name="Mol. Cell">
        <title>Tardigrades use intrinsically disordered proteins to survive desiccation.</title>
        <authorList>
            <person name="Boothby T.C."/>
            <person name="Tapia H."/>
            <person name="Brozena A.H."/>
            <person name="Piszkiewicz S."/>
            <person name="Smith A.E."/>
            <person name="Giovannini I."/>
            <person name="Rebecchi L."/>
            <person name="Pielak G.J."/>
            <person name="Koshland D."/>
            <person name="Goldstein B."/>
        </authorList>
    </citation>
    <scope>FUNCTION</scope>
    <scope>INDUCTION</scope>
    <scope>DISRUPTION PHENOTYPE</scope>
</reference>
<accession>P0CU39</accession>
<sequence length="168" mass="18752">MARFLVALALFGVVAMTAASGDAPKEWSGKPWLGKFVAEVSDKSENWEAFVDALGLPDQYPRAQLKTIHSFYKQGEHYHHILSLPDKNINKDIEFTLGQEVEIKHGEHSLKIKYFEDGNKLVADVSIPAKGKSIHDVYDVQGDQLIKSYKVGDVVAKKWFKKVANPAA</sequence>
<organism evidence="4">
    <name type="scientific">Hypsibius exemplaris</name>
    <name type="common">Freshwater tardigrade</name>
    <dbReference type="NCBI Taxonomy" id="2072580"/>
    <lineage>
        <taxon>Eukaryota</taxon>
        <taxon>Metazoa</taxon>
        <taxon>Ecdysozoa</taxon>
        <taxon>Tardigrada</taxon>
        <taxon>Eutardigrada</taxon>
        <taxon>Parachela</taxon>
        <taxon>Hypsibioidea</taxon>
        <taxon>Hypsibiidae</taxon>
        <taxon>Hypsibius</taxon>
    </lineage>
</organism>
<evidence type="ECO:0000255" key="1"/>
<evidence type="ECO:0000269" key="2">
    <source>
    </source>
</evidence>
<evidence type="ECO:0000303" key="3">
    <source>
    </source>
</evidence>
<evidence type="ECO:0000303" key="4">
    <source>
    </source>
</evidence>
<evidence type="ECO:0000305" key="5"/>
<evidence type="ECO:0000305" key="6">
    <source>
    </source>
</evidence>
<evidence type="ECO:0000305" key="7">
    <source>
    </source>
</evidence>